<dbReference type="EMBL" id="CP000805">
    <property type="protein sequence ID" value="ACD71429.1"/>
    <property type="molecule type" value="Genomic_DNA"/>
</dbReference>
<dbReference type="RefSeq" id="WP_010882457.1">
    <property type="nucleotide sequence ID" value="NC_021508.1"/>
</dbReference>
<dbReference type="SMR" id="B2S4Q0"/>
<dbReference type="KEGG" id="tpp:TPASS_1013"/>
<dbReference type="PATRIC" id="fig|455434.6.peg.1001"/>
<dbReference type="Proteomes" id="UP000001202">
    <property type="component" value="Chromosome"/>
</dbReference>
<dbReference type="GO" id="GO:0005737">
    <property type="term" value="C:cytoplasm"/>
    <property type="evidence" value="ECO:0007669"/>
    <property type="project" value="UniProtKB-SubCell"/>
</dbReference>
<dbReference type="GO" id="GO:0005524">
    <property type="term" value="F:ATP binding"/>
    <property type="evidence" value="ECO:0007669"/>
    <property type="project" value="InterPro"/>
</dbReference>
<dbReference type="GO" id="GO:0046872">
    <property type="term" value="F:metal ion binding"/>
    <property type="evidence" value="ECO:0007669"/>
    <property type="project" value="TreeGrafter"/>
</dbReference>
<dbReference type="GO" id="GO:0044183">
    <property type="term" value="F:protein folding chaperone"/>
    <property type="evidence" value="ECO:0007669"/>
    <property type="project" value="InterPro"/>
</dbReference>
<dbReference type="GO" id="GO:0051087">
    <property type="term" value="F:protein-folding chaperone binding"/>
    <property type="evidence" value="ECO:0007669"/>
    <property type="project" value="TreeGrafter"/>
</dbReference>
<dbReference type="GO" id="GO:0051082">
    <property type="term" value="F:unfolded protein binding"/>
    <property type="evidence" value="ECO:0007669"/>
    <property type="project" value="TreeGrafter"/>
</dbReference>
<dbReference type="GO" id="GO:0051085">
    <property type="term" value="P:chaperone cofactor-dependent protein refolding"/>
    <property type="evidence" value="ECO:0007669"/>
    <property type="project" value="TreeGrafter"/>
</dbReference>
<dbReference type="CDD" id="cd00320">
    <property type="entry name" value="cpn10"/>
    <property type="match status" value="1"/>
</dbReference>
<dbReference type="FunFam" id="2.30.33.40:FF:000001">
    <property type="entry name" value="10 kDa chaperonin"/>
    <property type="match status" value="1"/>
</dbReference>
<dbReference type="Gene3D" id="2.30.33.40">
    <property type="entry name" value="GroES chaperonin"/>
    <property type="match status" value="1"/>
</dbReference>
<dbReference type="HAMAP" id="MF_00580">
    <property type="entry name" value="CH10"/>
    <property type="match status" value="1"/>
</dbReference>
<dbReference type="InterPro" id="IPR020818">
    <property type="entry name" value="Chaperonin_GroES"/>
</dbReference>
<dbReference type="InterPro" id="IPR037124">
    <property type="entry name" value="Chaperonin_GroES_sf"/>
</dbReference>
<dbReference type="InterPro" id="IPR018369">
    <property type="entry name" value="Chaprnonin_Cpn10_CS"/>
</dbReference>
<dbReference type="InterPro" id="IPR011032">
    <property type="entry name" value="GroES-like_sf"/>
</dbReference>
<dbReference type="NCBIfam" id="NF001531">
    <property type="entry name" value="PRK00364.2-2"/>
    <property type="match status" value="1"/>
</dbReference>
<dbReference type="PANTHER" id="PTHR10772">
    <property type="entry name" value="10 KDA HEAT SHOCK PROTEIN"/>
    <property type="match status" value="1"/>
</dbReference>
<dbReference type="PANTHER" id="PTHR10772:SF63">
    <property type="entry name" value="20 KDA CHAPERONIN, CHLOROPLASTIC"/>
    <property type="match status" value="1"/>
</dbReference>
<dbReference type="Pfam" id="PF00166">
    <property type="entry name" value="Cpn10"/>
    <property type="match status" value="1"/>
</dbReference>
<dbReference type="PRINTS" id="PR00297">
    <property type="entry name" value="CHAPERONIN10"/>
</dbReference>
<dbReference type="SMART" id="SM00883">
    <property type="entry name" value="Cpn10"/>
    <property type="match status" value="1"/>
</dbReference>
<dbReference type="SUPFAM" id="SSF50129">
    <property type="entry name" value="GroES-like"/>
    <property type="match status" value="1"/>
</dbReference>
<dbReference type="PROSITE" id="PS00681">
    <property type="entry name" value="CHAPERONINS_CPN10"/>
    <property type="match status" value="1"/>
</dbReference>
<feature type="chain" id="PRO_1000129722" description="Co-chaperonin GroES">
    <location>
        <begin position="1"/>
        <end position="88"/>
    </location>
</feature>
<protein>
    <recommendedName>
        <fullName evidence="1">Co-chaperonin GroES</fullName>
    </recommendedName>
    <alternativeName>
        <fullName evidence="1">10 kDa chaperonin</fullName>
    </alternativeName>
    <alternativeName>
        <fullName evidence="1">Chaperonin-10</fullName>
        <shortName evidence="1">Cpn10</shortName>
    </alternativeName>
</protein>
<organism>
    <name type="scientific">Treponema pallidum subsp. pallidum (strain SS14)</name>
    <dbReference type="NCBI Taxonomy" id="455434"/>
    <lineage>
        <taxon>Bacteria</taxon>
        <taxon>Pseudomonadati</taxon>
        <taxon>Spirochaetota</taxon>
        <taxon>Spirochaetia</taxon>
        <taxon>Spirochaetales</taxon>
        <taxon>Treponemataceae</taxon>
        <taxon>Treponema</taxon>
    </lineage>
</organism>
<evidence type="ECO:0000255" key="1">
    <source>
        <dbReference type="HAMAP-Rule" id="MF_00580"/>
    </source>
</evidence>
<comment type="function">
    <text evidence="1">Together with the chaperonin GroEL, plays an essential role in assisting protein folding. The GroEL-GroES system forms a nano-cage that allows encapsulation of the non-native substrate proteins and provides a physical environment optimized to promote and accelerate protein folding. GroES binds to the apical surface of the GroEL ring, thereby capping the opening of the GroEL channel.</text>
</comment>
<comment type="subunit">
    <text evidence="1">Heptamer of 7 subunits arranged in a ring. Interacts with the chaperonin GroEL.</text>
</comment>
<comment type="subcellular location">
    <subcellularLocation>
        <location evidence="1">Cytoplasm</location>
    </subcellularLocation>
</comment>
<comment type="similarity">
    <text evidence="1">Belongs to the GroES chaperonin family.</text>
</comment>
<keyword id="KW-0143">Chaperone</keyword>
<keyword id="KW-0963">Cytoplasm</keyword>
<gene>
    <name evidence="1" type="primary">groES</name>
    <name evidence="1" type="synonym">groS</name>
    <name type="ordered locus">TPASS_1013</name>
</gene>
<name>CH10_TREPS</name>
<accession>B2S4Q0</accession>
<reference key="1">
    <citation type="journal article" date="2008" name="BMC Microbiol.">
        <title>Complete genome sequence of Treponema pallidum ssp. pallidum strain SS14 determined with oligonucleotide arrays.</title>
        <authorList>
            <person name="Matejkova P."/>
            <person name="Strouhal M."/>
            <person name="Smajs D."/>
            <person name="Norris S.J."/>
            <person name="Palzkill T."/>
            <person name="Petrosino J.F."/>
            <person name="Sodergren E."/>
            <person name="Norton J.E."/>
            <person name="Singh J."/>
            <person name="Richmond T.A."/>
            <person name="Molla M.N."/>
            <person name="Albert T.J."/>
            <person name="Weinstock G.M."/>
        </authorList>
    </citation>
    <scope>NUCLEOTIDE SEQUENCE [LARGE SCALE GENOMIC DNA]</scope>
    <source>
        <strain>SS14</strain>
    </source>
</reference>
<proteinExistence type="inferred from homology"/>
<sequence>MKIIPLADRVLVKTDKSETKTASGIIIPDTAQEKMQSGTVIAVGSDSEKIKVSVGQRVMHDKYAGNPVKIDGEEHLLLKGADILAVIE</sequence>